<protein>
    <recommendedName>
        <fullName evidence="1">Phosphatidylglycerol--prolipoprotein diacylglyceryl transferase</fullName>
        <ecNumber evidence="1">2.5.1.145</ecNumber>
    </recommendedName>
</protein>
<reference key="1">
    <citation type="journal article" date="2006" name="PLoS Genet.">
        <title>The complete genome sequence and comparative genome analysis of the high pathogenicity Yersinia enterocolitica strain 8081.</title>
        <authorList>
            <person name="Thomson N.R."/>
            <person name="Howard S."/>
            <person name="Wren B.W."/>
            <person name="Holden M.T.G."/>
            <person name="Crossman L."/>
            <person name="Challis G.L."/>
            <person name="Churcher C."/>
            <person name="Mungall K."/>
            <person name="Brooks K."/>
            <person name="Chillingworth T."/>
            <person name="Feltwell T."/>
            <person name="Abdellah Z."/>
            <person name="Hauser H."/>
            <person name="Jagels K."/>
            <person name="Maddison M."/>
            <person name="Moule S."/>
            <person name="Sanders M."/>
            <person name="Whitehead S."/>
            <person name="Quail M.A."/>
            <person name="Dougan G."/>
            <person name="Parkhill J."/>
            <person name="Prentice M.B."/>
        </authorList>
    </citation>
    <scope>NUCLEOTIDE SEQUENCE [LARGE SCALE GENOMIC DNA]</scope>
    <source>
        <strain>NCTC 13174 / 8081</strain>
    </source>
</reference>
<keyword id="KW-0997">Cell inner membrane</keyword>
<keyword id="KW-1003">Cell membrane</keyword>
<keyword id="KW-0472">Membrane</keyword>
<keyword id="KW-0808">Transferase</keyword>
<keyword id="KW-0812">Transmembrane</keyword>
<keyword id="KW-1133">Transmembrane helix</keyword>
<comment type="function">
    <text evidence="1">Catalyzes the transfer of the diacylglyceryl group from phosphatidylglycerol to the sulfhydryl group of the N-terminal cysteine of a prolipoprotein, the first step in the formation of mature lipoproteins.</text>
</comment>
<comment type="catalytic activity">
    <reaction evidence="1">
        <text>L-cysteinyl-[prolipoprotein] + a 1,2-diacyl-sn-glycero-3-phospho-(1'-sn-glycerol) = an S-1,2-diacyl-sn-glyceryl-L-cysteinyl-[prolipoprotein] + sn-glycerol 1-phosphate + H(+)</text>
        <dbReference type="Rhea" id="RHEA:56712"/>
        <dbReference type="Rhea" id="RHEA-COMP:14679"/>
        <dbReference type="Rhea" id="RHEA-COMP:14680"/>
        <dbReference type="ChEBI" id="CHEBI:15378"/>
        <dbReference type="ChEBI" id="CHEBI:29950"/>
        <dbReference type="ChEBI" id="CHEBI:57685"/>
        <dbReference type="ChEBI" id="CHEBI:64716"/>
        <dbReference type="ChEBI" id="CHEBI:140658"/>
        <dbReference type="EC" id="2.5.1.145"/>
    </reaction>
</comment>
<comment type="pathway">
    <text evidence="1">Protein modification; lipoprotein biosynthesis (diacylglyceryl transfer).</text>
</comment>
<comment type="subcellular location">
    <subcellularLocation>
        <location evidence="1">Cell inner membrane</location>
        <topology evidence="1">Multi-pass membrane protein</topology>
    </subcellularLocation>
</comment>
<comment type="similarity">
    <text evidence="1">Belongs to the Lgt family.</text>
</comment>
<proteinExistence type="inferred from homology"/>
<gene>
    <name evidence="1" type="primary">lgt</name>
    <name type="ordered locus">YE3318</name>
</gene>
<feature type="chain" id="PRO_1000053529" description="Phosphatidylglycerol--prolipoprotein diacylglyceryl transferase">
    <location>
        <begin position="1"/>
        <end position="290"/>
    </location>
</feature>
<feature type="transmembrane region" description="Helical" evidence="1">
    <location>
        <begin position="21"/>
        <end position="41"/>
    </location>
</feature>
<feature type="transmembrane region" description="Helical" evidence="1">
    <location>
        <begin position="60"/>
        <end position="80"/>
    </location>
</feature>
<feature type="transmembrane region" description="Helical" evidence="1">
    <location>
        <begin position="96"/>
        <end position="116"/>
    </location>
</feature>
<feature type="transmembrane region" description="Helical" evidence="1">
    <location>
        <begin position="124"/>
        <end position="144"/>
    </location>
</feature>
<feature type="transmembrane region" description="Helical" evidence="1">
    <location>
        <begin position="199"/>
        <end position="219"/>
    </location>
</feature>
<feature type="transmembrane region" description="Helical" evidence="1">
    <location>
        <begin position="226"/>
        <end position="246"/>
    </location>
</feature>
<feature type="transmembrane region" description="Helical" evidence="1">
    <location>
        <begin position="259"/>
        <end position="279"/>
    </location>
</feature>
<feature type="binding site" evidence="1">
    <location>
        <position position="143"/>
    </location>
    <ligand>
        <name>a 1,2-diacyl-sn-glycero-3-phospho-(1'-sn-glycerol)</name>
        <dbReference type="ChEBI" id="CHEBI:64716"/>
    </ligand>
</feature>
<accession>A1JPD0</accession>
<dbReference type="EC" id="2.5.1.145" evidence="1"/>
<dbReference type="EMBL" id="AM286415">
    <property type="protein sequence ID" value="CAL13347.1"/>
    <property type="molecule type" value="Genomic_DNA"/>
</dbReference>
<dbReference type="RefSeq" id="WP_011816984.1">
    <property type="nucleotide sequence ID" value="NC_008800.1"/>
</dbReference>
<dbReference type="RefSeq" id="YP_001007491.1">
    <property type="nucleotide sequence ID" value="NC_008800.1"/>
</dbReference>
<dbReference type="SMR" id="A1JPD0"/>
<dbReference type="GeneID" id="93972804"/>
<dbReference type="KEGG" id="yen:YE3318"/>
<dbReference type="PATRIC" id="fig|393305.7.peg.3527"/>
<dbReference type="eggNOG" id="COG0682">
    <property type="taxonomic scope" value="Bacteria"/>
</dbReference>
<dbReference type="HOGENOM" id="CLU_013386_1_0_6"/>
<dbReference type="OrthoDB" id="871140at2"/>
<dbReference type="UniPathway" id="UPA00664"/>
<dbReference type="Proteomes" id="UP000000642">
    <property type="component" value="Chromosome"/>
</dbReference>
<dbReference type="GO" id="GO:0005886">
    <property type="term" value="C:plasma membrane"/>
    <property type="evidence" value="ECO:0007669"/>
    <property type="project" value="UniProtKB-SubCell"/>
</dbReference>
<dbReference type="GO" id="GO:0008961">
    <property type="term" value="F:phosphatidylglycerol-prolipoprotein diacylglyceryl transferase activity"/>
    <property type="evidence" value="ECO:0007669"/>
    <property type="project" value="UniProtKB-UniRule"/>
</dbReference>
<dbReference type="GO" id="GO:0042158">
    <property type="term" value="P:lipoprotein biosynthetic process"/>
    <property type="evidence" value="ECO:0007669"/>
    <property type="project" value="UniProtKB-UniRule"/>
</dbReference>
<dbReference type="HAMAP" id="MF_01147">
    <property type="entry name" value="Lgt"/>
    <property type="match status" value="1"/>
</dbReference>
<dbReference type="InterPro" id="IPR001640">
    <property type="entry name" value="Lgt"/>
</dbReference>
<dbReference type="NCBIfam" id="TIGR00544">
    <property type="entry name" value="lgt"/>
    <property type="match status" value="1"/>
</dbReference>
<dbReference type="PANTHER" id="PTHR30589:SF0">
    <property type="entry name" value="PHOSPHATIDYLGLYCEROL--PROLIPOPROTEIN DIACYLGLYCERYL TRANSFERASE"/>
    <property type="match status" value="1"/>
</dbReference>
<dbReference type="PANTHER" id="PTHR30589">
    <property type="entry name" value="PROLIPOPROTEIN DIACYLGLYCERYL TRANSFERASE"/>
    <property type="match status" value="1"/>
</dbReference>
<dbReference type="Pfam" id="PF01790">
    <property type="entry name" value="LGT"/>
    <property type="match status" value="1"/>
</dbReference>
<dbReference type="PROSITE" id="PS01311">
    <property type="entry name" value="LGT"/>
    <property type="match status" value="1"/>
</dbReference>
<organism>
    <name type="scientific">Yersinia enterocolitica serotype O:8 / biotype 1B (strain NCTC 13174 / 8081)</name>
    <dbReference type="NCBI Taxonomy" id="393305"/>
    <lineage>
        <taxon>Bacteria</taxon>
        <taxon>Pseudomonadati</taxon>
        <taxon>Pseudomonadota</taxon>
        <taxon>Gammaproteobacteria</taxon>
        <taxon>Enterobacterales</taxon>
        <taxon>Yersiniaceae</taxon>
        <taxon>Yersinia</taxon>
    </lineage>
</organism>
<name>LGT_YERE8</name>
<sequence length="290" mass="32607">MSNSYLAFPKFDPVIFSIGPVSLHWYGLMYLVGFVFAMWLAVRRANKPGSGWTKEEVENLLYAGFLGVFVGGRVGYVLFYNLPLFLDNPLYLFKVWDGGMSFHGGLIGVICVMLWFARRTKRHFFQVADFIAPLIPFGLGAGRLGNFINGELWGRVTTDTPWAMLFPTSRGEDIAIVAADPAKWQAIFNQYGVLPRHPSQLYEMILEGVVLFIILNLFIRKPRPMGSVSGLFLIGYGAFRIIVECFRQPDAQLGLFDGVISMGQILSVPMILAGIIMMIWAYRRPAQQLS</sequence>
<evidence type="ECO:0000255" key="1">
    <source>
        <dbReference type="HAMAP-Rule" id="MF_01147"/>
    </source>
</evidence>